<keyword id="KW-0028">Amino-acid biosynthesis</keyword>
<keyword id="KW-0963">Cytoplasm</keyword>
<keyword id="KW-0368">Histidine biosynthesis</keyword>
<reference key="1">
    <citation type="journal article" date="2014" name="Stand. Genomic Sci.">
        <title>Complete genome sequence of Anabaena variabilis ATCC 29413.</title>
        <authorList>
            <person name="Thiel T."/>
            <person name="Pratte B.S."/>
            <person name="Zhong J."/>
            <person name="Goodwin L."/>
            <person name="Copeland A."/>
            <person name="Lucas S."/>
            <person name="Han C."/>
            <person name="Pitluck S."/>
            <person name="Land M.L."/>
            <person name="Kyrpides N.C."/>
            <person name="Woyke T."/>
        </authorList>
    </citation>
    <scope>NUCLEOTIDE SEQUENCE [LARGE SCALE GENOMIC DNA]</scope>
    <source>
        <strain>ATCC 29413 / PCC 7937</strain>
    </source>
</reference>
<feature type="chain" id="PRO_0000242816" description="ATP phosphoribosyltransferase regulatory subunit">
    <location>
        <begin position="1"/>
        <end position="404"/>
    </location>
</feature>
<comment type="function">
    <text evidence="1">Required for the first step of histidine biosynthesis. May allow the feedback regulation of ATP phosphoribosyltransferase activity by histidine.</text>
</comment>
<comment type="pathway">
    <text evidence="1">Amino-acid biosynthesis; L-histidine biosynthesis; L-histidine from 5-phospho-alpha-D-ribose 1-diphosphate: step 1/9.</text>
</comment>
<comment type="subunit">
    <text evidence="1">Heteromultimer composed of HisG and HisZ subunits.</text>
</comment>
<comment type="subcellular location">
    <subcellularLocation>
        <location evidence="1">Cytoplasm</location>
    </subcellularLocation>
</comment>
<comment type="miscellaneous">
    <text>This function is generally fulfilled by the C-terminal part of HisG, which is missing in some bacteria such as this one.</text>
</comment>
<comment type="similarity">
    <text evidence="1">Belongs to the class-II aminoacyl-tRNA synthetase family. HisZ subfamily.</text>
</comment>
<gene>
    <name evidence="1" type="primary">hisZ</name>
    <name type="ordered locus">Ava_0985</name>
</gene>
<organism>
    <name type="scientific">Trichormus variabilis (strain ATCC 29413 / PCC 7937)</name>
    <name type="common">Anabaena variabilis</name>
    <dbReference type="NCBI Taxonomy" id="240292"/>
    <lineage>
        <taxon>Bacteria</taxon>
        <taxon>Bacillati</taxon>
        <taxon>Cyanobacteriota</taxon>
        <taxon>Cyanophyceae</taxon>
        <taxon>Nostocales</taxon>
        <taxon>Nostocaceae</taxon>
        <taxon>Trichormus</taxon>
    </lineage>
</organism>
<evidence type="ECO:0000255" key="1">
    <source>
        <dbReference type="HAMAP-Rule" id="MF_00125"/>
    </source>
</evidence>
<protein>
    <recommendedName>
        <fullName evidence="1">ATP phosphoribosyltransferase regulatory subunit</fullName>
    </recommendedName>
</protein>
<accession>Q3MEH7</accession>
<sequence>MVYQPAAGARDLLPLDVAQKRWIEDKLQQVFHRWGYHRIITSTLERMDTLMAGEAIQRQMVIQLQNSEDEELGLRPELTASIARAVVTRMTNLRHPQRLYYNANVFRRIWENRHNRQQEFYQAGVELLGVGGLLANAEVLLLAGNCLTALGLQDWHLILGEAGITRSLLDAFPINLRAKVRSAIAHLDRITIDTLPLTDELRERARIMLDLRGNSTDVLQKVSSLNLDAEQQEAVNNLQSLVELLESGGKFPIILDLSLIQTIDYYTGIVFEIVNNTDSQARVLGRGGRYDQLLGLYHPQGENIPGIGFVLNIEDLYQVLLTTQQLPQETPASDWLVVPENPKAHSAAFAHAQKLRESPDLVRVELDLGGTDIPAIQQYARDRRIAQIAWIKADGSLIIEKVSQ</sequence>
<proteinExistence type="inferred from homology"/>
<dbReference type="EMBL" id="CP000117">
    <property type="protein sequence ID" value="ABA20609.1"/>
    <property type="molecule type" value="Genomic_DNA"/>
</dbReference>
<dbReference type="SMR" id="Q3MEH7"/>
<dbReference type="STRING" id="240292.Ava_0985"/>
<dbReference type="KEGG" id="ava:Ava_0985"/>
<dbReference type="eggNOG" id="COG3705">
    <property type="taxonomic scope" value="Bacteria"/>
</dbReference>
<dbReference type="HOGENOM" id="CLU_025113_0_2_3"/>
<dbReference type="UniPathway" id="UPA00031">
    <property type="reaction ID" value="UER00006"/>
</dbReference>
<dbReference type="Proteomes" id="UP000002533">
    <property type="component" value="Chromosome"/>
</dbReference>
<dbReference type="GO" id="GO:0005737">
    <property type="term" value="C:cytoplasm"/>
    <property type="evidence" value="ECO:0007669"/>
    <property type="project" value="UniProtKB-SubCell"/>
</dbReference>
<dbReference type="GO" id="GO:0004821">
    <property type="term" value="F:histidine-tRNA ligase activity"/>
    <property type="evidence" value="ECO:0007669"/>
    <property type="project" value="TreeGrafter"/>
</dbReference>
<dbReference type="GO" id="GO:0006427">
    <property type="term" value="P:histidyl-tRNA aminoacylation"/>
    <property type="evidence" value="ECO:0007669"/>
    <property type="project" value="TreeGrafter"/>
</dbReference>
<dbReference type="GO" id="GO:0000105">
    <property type="term" value="P:L-histidine biosynthetic process"/>
    <property type="evidence" value="ECO:0007669"/>
    <property type="project" value="UniProtKB-UniRule"/>
</dbReference>
<dbReference type="CDD" id="cd00773">
    <property type="entry name" value="HisRS-like_core"/>
    <property type="match status" value="1"/>
</dbReference>
<dbReference type="Gene3D" id="3.30.930.10">
    <property type="entry name" value="Bira Bifunctional Protein, Domain 2"/>
    <property type="match status" value="1"/>
</dbReference>
<dbReference type="HAMAP" id="MF_00125">
    <property type="entry name" value="HisZ"/>
    <property type="match status" value="1"/>
</dbReference>
<dbReference type="InterPro" id="IPR006195">
    <property type="entry name" value="aa-tRNA-synth_II"/>
</dbReference>
<dbReference type="InterPro" id="IPR045864">
    <property type="entry name" value="aa-tRNA-synth_II/BPL/LPL"/>
</dbReference>
<dbReference type="InterPro" id="IPR041715">
    <property type="entry name" value="HisRS-like_core"/>
</dbReference>
<dbReference type="InterPro" id="IPR004516">
    <property type="entry name" value="HisRS/HisZ"/>
</dbReference>
<dbReference type="InterPro" id="IPR004517">
    <property type="entry name" value="HisZ"/>
</dbReference>
<dbReference type="NCBIfam" id="TIGR00443">
    <property type="entry name" value="hisZ_biosyn_reg"/>
    <property type="match status" value="1"/>
</dbReference>
<dbReference type="NCBIfam" id="NF008940">
    <property type="entry name" value="PRK12292.2-3"/>
    <property type="match status" value="1"/>
</dbReference>
<dbReference type="PANTHER" id="PTHR43707:SF1">
    <property type="entry name" value="HISTIDINE--TRNA LIGASE, MITOCHONDRIAL-RELATED"/>
    <property type="match status" value="1"/>
</dbReference>
<dbReference type="PANTHER" id="PTHR43707">
    <property type="entry name" value="HISTIDYL-TRNA SYNTHETASE"/>
    <property type="match status" value="1"/>
</dbReference>
<dbReference type="Pfam" id="PF13393">
    <property type="entry name" value="tRNA-synt_His"/>
    <property type="match status" value="1"/>
</dbReference>
<dbReference type="PIRSF" id="PIRSF001549">
    <property type="entry name" value="His-tRNA_synth"/>
    <property type="match status" value="1"/>
</dbReference>
<dbReference type="SUPFAM" id="SSF55681">
    <property type="entry name" value="Class II aaRS and biotin synthetases"/>
    <property type="match status" value="1"/>
</dbReference>
<dbReference type="PROSITE" id="PS50862">
    <property type="entry name" value="AA_TRNA_LIGASE_II"/>
    <property type="match status" value="1"/>
</dbReference>
<name>HISZ_TRIV2</name>